<evidence type="ECO:0000255" key="1">
    <source>
        <dbReference type="HAMAP-Rule" id="MF_01337"/>
    </source>
</evidence>
<evidence type="ECO:0000305" key="2"/>
<accession>B5FJJ8</accession>
<proteinExistence type="inferred from homology"/>
<keyword id="KW-0687">Ribonucleoprotein</keyword>
<keyword id="KW-0689">Ribosomal protein</keyword>
<keyword id="KW-0694">RNA-binding</keyword>
<keyword id="KW-0699">rRNA-binding</keyword>
<name>RL18_SALDC</name>
<organism>
    <name type="scientific">Salmonella dublin (strain CT_02021853)</name>
    <dbReference type="NCBI Taxonomy" id="439851"/>
    <lineage>
        <taxon>Bacteria</taxon>
        <taxon>Pseudomonadati</taxon>
        <taxon>Pseudomonadota</taxon>
        <taxon>Gammaproteobacteria</taxon>
        <taxon>Enterobacterales</taxon>
        <taxon>Enterobacteriaceae</taxon>
        <taxon>Salmonella</taxon>
    </lineage>
</organism>
<protein>
    <recommendedName>
        <fullName evidence="1">Large ribosomal subunit protein uL18</fullName>
    </recommendedName>
    <alternativeName>
        <fullName evidence="2">50S ribosomal protein L18</fullName>
    </alternativeName>
</protein>
<sequence>MDKKSARIRRATRARRKLKELGATRLVVHRTPRHIYAQVIAPNGSEVLVAASTVEKAIAEQLKYTGNKDAAAAVGKAVAERALEKGIKDVSFDRSGFQYHGRVQALADAAREAGLQF</sequence>
<comment type="function">
    <text evidence="1">This is one of the proteins that bind and probably mediate the attachment of the 5S RNA into the large ribosomal subunit, where it forms part of the central protuberance.</text>
</comment>
<comment type="subunit">
    <text evidence="1">Part of the 50S ribosomal subunit; part of the 5S rRNA/L5/L18/L25 subcomplex. Contacts the 5S and 23S rRNAs.</text>
</comment>
<comment type="similarity">
    <text evidence="1">Belongs to the universal ribosomal protein uL18 family.</text>
</comment>
<gene>
    <name evidence="1" type="primary">rplR</name>
    <name type="ordered locus">SeD_A3791</name>
</gene>
<feature type="chain" id="PRO_1000142712" description="Large ribosomal subunit protein uL18">
    <location>
        <begin position="1"/>
        <end position="117"/>
    </location>
</feature>
<dbReference type="EMBL" id="CP001144">
    <property type="protein sequence ID" value="ACH74653.1"/>
    <property type="molecule type" value="Genomic_DNA"/>
</dbReference>
<dbReference type="RefSeq" id="WP_000358956.1">
    <property type="nucleotide sequence ID" value="NC_011205.1"/>
</dbReference>
<dbReference type="SMR" id="B5FJJ8"/>
<dbReference type="GeneID" id="93035747"/>
<dbReference type="KEGG" id="sed:SeD_A3791"/>
<dbReference type="HOGENOM" id="CLU_098841_0_1_6"/>
<dbReference type="Proteomes" id="UP000008322">
    <property type="component" value="Chromosome"/>
</dbReference>
<dbReference type="GO" id="GO:0022625">
    <property type="term" value="C:cytosolic large ribosomal subunit"/>
    <property type="evidence" value="ECO:0007669"/>
    <property type="project" value="TreeGrafter"/>
</dbReference>
<dbReference type="GO" id="GO:0008097">
    <property type="term" value="F:5S rRNA binding"/>
    <property type="evidence" value="ECO:0007669"/>
    <property type="project" value="TreeGrafter"/>
</dbReference>
<dbReference type="GO" id="GO:0003735">
    <property type="term" value="F:structural constituent of ribosome"/>
    <property type="evidence" value="ECO:0007669"/>
    <property type="project" value="InterPro"/>
</dbReference>
<dbReference type="GO" id="GO:0006412">
    <property type="term" value="P:translation"/>
    <property type="evidence" value="ECO:0007669"/>
    <property type="project" value="UniProtKB-UniRule"/>
</dbReference>
<dbReference type="CDD" id="cd00432">
    <property type="entry name" value="Ribosomal_L18_L5e"/>
    <property type="match status" value="1"/>
</dbReference>
<dbReference type="FunFam" id="3.30.420.100:FF:000001">
    <property type="entry name" value="50S ribosomal protein L18"/>
    <property type="match status" value="1"/>
</dbReference>
<dbReference type="Gene3D" id="3.30.420.100">
    <property type="match status" value="1"/>
</dbReference>
<dbReference type="HAMAP" id="MF_01337_B">
    <property type="entry name" value="Ribosomal_uL18_B"/>
    <property type="match status" value="1"/>
</dbReference>
<dbReference type="InterPro" id="IPR004389">
    <property type="entry name" value="Ribosomal_uL18_bac-type"/>
</dbReference>
<dbReference type="InterPro" id="IPR005484">
    <property type="entry name" value="Ribosomal_uL18_bac/euk"/>
</dbReference>
<dbReference type="NCBIfam" id="TIGR00060">
    <property type="entry name" value="L18_bact"/>
    <property type="match status" value="1"/>
</dbReference>
<dbReference type="PANTHER" id="PTHR12899">
    <property type="entry name" value="39S RIBOSOMAL PROTEIN L18, MITOCHONDRIAL"/>
    <property type="match status" value="1"/>
</dbReference>
<dbReference type="PANTHER" id="PTHR12899:SF3">
    <property type="entry name" value="LARGE RIBOSOMAL SUBUNIT PROTEIN UL18M"/>
    <property type="match status" value="1"/>
</dbReference>
<dbReference type="Pfam" id="PF00861">
    <property type="entry name" value="Ribosomal_L18p"/>
    <property type="match status" value="1"/>
</dbReference>
<dbReference type="SUPFAM" id="SSF53137">
    <property type="entry name" value="Translational machinery components"/>
    <property type="match status" value="1"/>
</dbReference>
<reference key="1">
    <citation type="journal article" date="2011" name="J. Bacteriol.">
        <title>Comparative genomics of 28 Salmonella enterica isolates: evidence for CRISPR-mediated adaptive sublineage evolution.</title>
        <authorList>
            <person name="Fricke W.F."/>
            <person name="Mammel M.K."/>
            <person name="McDermott P.F."/>
            <person name="Tartera C."/>
            <person name="White D.G."/>
            <person name="Leclerc J.E."/>
            <person name="Ravel J."/>
            <person name="Cebula T.A."/>
        </authorList>
    </citation>
    <scope>NUCLEOTIDE SEQUENCE [LARGE SCALE GENOMIC DNA]</scope>
    <source>
        <strain>CT_02021853</strain>
    </source>
</reference>